<evidence type="ECO:0000250" key="1"/>
<evidence type="ECO:0000250" key="2">
    <source>
        <dbReference type="UniProtKB" id="P60467"/>
    </source>
</evidence>
<evidence type="ECO:0000250" key="3">
    <source>
        <dbReference type="UniProtKB" id="P60468"/>
    </source>
</evidence>
<evidence type="ECO:0000255" key="4"/>
<evidence type="ECO:0000256" key="5">
    <source>
        <dbReference type="SAM" id="MobiDB-lite"/>
    </source>
</evidence>
<evidence type="ECO:0000269" key="6">
    <source>
    </source>
</evidence>
<evidence type="ECO:0000303" key="7">
    <source>
    </source>
</evidence>
<evidence type="ECO:0000305" key="8"/>
<evidence type="ECO:0000312" key="9">
    <source>
        <dbReference type="MGI" id="MGI:1913462"/>
    </source>
</evidence>
<name>SC61B_MOUSE</name>
<proteinExistence type="evidence at protein level"/>
<sequence length="96" mass="9958">MPGPTPSGTNVGSSGRSPSKAVAARAAGSTVRQRKNASCGTRSAGRTTSAGTGGMWRFYTEDSPGLKVGPVPVLVMSLLFIAAVFMLHIWGKYTRS</sequence>
<organism>
    <name type="scientific">Mus musculus</name>
    <name type="common">Mouse</name>
    <dbReference type="NCBI Taxonomy" id="10090"/>
    <lineage>
        <taxon>Eukaryota</taxon>
        <taxon>Metazoa</taxon>
        <taxon>Chordata</taxon>
        <taxon>Craniata</taxon>
        <taxon>Vertebrata</taxon>
        <taxon>Euteleostomi</taxon>
        <taxon>Mammalia</taxon>
        <taxon>Eutheria</taxon>
        <taxon>Euarchontoglires</taxon>
        <taxon>Glires</taxon>
        <taxon>Rodentia</taxon>
        <taxon>Myomorpha</taxon>
        <taxon>Muroidea</taxon>
        <taxon>Muridae</taxon>
        <taxon>Murinae</taxon>
        <taxon>Mus</taxon>
        <taxon>Mus</taxon>
    </lineage>
</organism>
<feature type="initiator methionine" description="Removed" evidence="2 3">
    <location>
        <position position="1"/>
    </location>
</feature>
<feature type="chain" id="PRO_0000157255" description="Protein transport protein Sec61 subunit beta">
    <location>
        <begin position="2"/>
        <end position="96"/>
    </location>
</feature>
<feature type="topological domain" description="Cytoplasmic" evidence="4">
    <location>
        <begin position="2"/>
        <end position="70"/>
    </location>
</feature>
<feature type="transmembrane region" description="Helical" evidence="4">
    <location>
        <begin position="71"/>
        <end position="91"/>
    </location>
</feature>
<feature type="region of interest" description="Disordered" evidence="5">
    <location>
        <begin position="1"/>
        <end position="54"/>
    </location>
</feature>
<feature type="compositionally biased region" description="Polar residues" evidence="5">
    <location>
        <begin position="1"/>
        <end position="17"/>
    </location>
</feature>
<feature type="compositionally biased region" description="Low complexity" evidence="5">
    <location>
        <begin position="40"/>
        <end position="50"/>
    </location>
</feature>
<feature type="modified residue" description="N-acetylproline" evidence="3">
    <location>
        <position position="2"/>
    </location>
</feature>
<feature type="modified residue" description="Phosphoserine" evidence="3">
    <location>
        <position position="7"/>
    </location>
</feature>
<feature type="modified residue" description="Phosphothreonine" evidence="3">
    <location>
        <position position="9"/>
    </location>
</feature>
<feature type="modified residue" description="Phosphoserine" evidence="3">
    <location>
        <position position="13"/>
    </location>
</feature>
<feature type="modified residue" description="Phosphoserine" evidence="3">
    <location>
        <position position="14"/>
    </location>
</feature>
<feature type="modified residue" description="Phosphoserine" evidence="3">
    <location>
        <position position="17"/>
    </location>
</feature>
<feature type="lipid moiety-binding region" description="S-palmitoyl cysteine" evidence="1">
    <location>
        <position position="39"/>
    </location>
</feature>
<comment type="function">
    <text evidence="3 6">Component of SEC61 channel-forming translocon complex that mediates transport of signal peptide-containing precursor polypeptides across the endoplasmic reticulum (ER) (By similarity). Forms a ribosome receptor and a gated pore in the ER membrane, both functions required for cotranslational translocation of nascent polypeptides (By similarity). The SEC61 channel is also involved in ER membrane insertion of transmembrane proteins: it mediates membrane insertion of the first few transmembrane segments of proteins, while insertion of subsequent transmembrane regions of multi-pass membrane proteins is mediated by the multi-pass translocon (MPT) complex (By similarity). The SEC61 channel cooperates with the translocating protein TRAM1 to import nascent proteins into the ER (By similarity). Required for PKD1/Polycystin-1 biogenesis (PubMed:28375157).</text>
</comment>
<comment type="subunit">
    <text evidence="2 3">The SEC61 channel-forming translocon complex consists of channel-forming core components SEC61A1, SEC61B and SEC61G and different auxiliary components such as SEC62 and SEC63 (By similarity). The SEC61 channel associates with the multi-pass translocon (MPT) complex. Interacts with TRAM1 (By similarity).</text>
</comment>
<comment type="subcellular location">
    <subcellularLocation>
        <location evidence="3">Endoplasmic reticulum membrane</location>
        <topology evidence="4">Single-pass membrane protein</topology>
    </subcellularLocation>
</comment>
<comment type="similarity">
    <text evidence="8">Belongs to the SEC61-beta family.</text>
</comment>
<keyword id="KW-0007">Acetylation</keyword>
<keyword id="KW-0903">Direct protein sequencing</keyword>
<keyword id="KW-0256">Endoplasmic reticulum</keyword>
<keyword id="KW-0449">Lipoprotein</keyword>
<keyword id="KW-0472">Membrane</keyword>
<keyword id="KW-0564">Palmitate</keyword>
<keyword id="KW-0597">Phosphoprotein</keyword>
<keyword id="KW-0653">Protein transport</keyword>
<keyword id="KW-1185">Reference proteome</keyword>
<keyword id="KW-0811">Translocation</keyword>
<keyword id="KW-0812">Transmembrane</keyword>
<keyword id="KW-1133">Transmembrane helix</keyword>
<keyword id="KW-0813">Transport</keyword>
<reference key="1">
    <citation type="journal article" date="2005" name="Science">
        <title>The transcriptional landscape of the mammalian genome.</title>
        <authorList>
            <person name="Carninci P."/>
            <person name="Kasukawa T."/>
            <person name="Katayama S."/>
            <person name="Gough J."/>
            <person name="Frith M.C."/>
            <person name="Maeda N."/>
            <person name="Oyama R."/>
            <person name="Ravasi T."/>
            <person name="Lenhard B."/>
            <person name="Wells C."/>
            <person name="Kodzius R."/>
            <person name="Shimokawa K."/>
            <person name="Bajic V.B."/>
            <person name="Brenner S.E."/>
            <person name="Batalov S."/>
            <person name="Forrest A.R."/>
            <person name="Zavolan M."/>
            <person name="Davis M.J."/>
            <person name="Wilming L.G."/>
            <person name="Aidinis V."/>
            <person name="Allen J.E."/>
            <person name="Ambesi-Impiombato A."/>
            <person name="Apweiler R."/>
            <person name="Aturaliya R.N."/>
            <person name="Bailey T.L."/>
            <person name="Bansal M."/>
            <person name="Baxter L."/>
            <person name="Beisel K.W."/>
            <person name="Bersano T."/>
            <person name="Bono H."/>
            <person name="Chalk A.M."/>
            <person name="Chiu K.P."/>
            <person name="Choudhary V."/>
            <person name="Christoffels A."/>
            <person name="Clutterbuck D.R."/>
            <person name="Crowe M.L."/>
            <person name="Dalla E."/>
            <person name="Dalrymple B.P."/>
            <person name="de Bono B."/>
            <person name="Della Gatta G."/>
            <person name="di Bernardo D."/>
            <person name="Down T."/>
            <person name="Engstrom P."/>
            <person name="Fagiolini M."/>
            <person name="Faulkner G."/>
            <person name="Fletcher C.F."/>
            <person name="Fukushima T."/>
            <person name="Furuno M."/>
            <person name="Futaki S."/>
            <person name="Gariboldi M."/>
            <person name="Georgii-Hemming P."/>
            <person name="Gingeras T.R."/>
            <person name="Gojobori T."/>
            <person name="Green R.E."/>
            <person name="Gustincich S."/>
            <person name="Harbers M."/>
            <person name="Hayashi Y."/>
            <person name="Hensch T.K."/>
            <person name="Hirokawa N."/>
            <person name="Hill D."/>
            <person name="Huminiecki L."/>
            <person name="Iacono M."/>
            <person name="Ikeo K."/>
            <person name="Iwama A."/>
            <person name="Ishikawa T."/>
            <person name="Jakt M."/>
            <person name="Kanapin A."/>
            <person name="Katoh M."/>
            <person name="Kawasawa Y."/>
            <person name="Kelso J."/>
            <person name="Kitamura H."/>
            <person name="Kitano H."/>
            <person name="Kollias G."/>
            <person name="Krishnan S.P."/>
            <person name="Kruger A."/>
            <person name="Kummerfeld S.K."/>
            <person name="Kurochkin I.V."/>
            <person name="Lareau L.F."/>
            <person name="Lazarevic D."/>
            <person name="Lipovich L."/>
            <person name="Liu J."/>
            <person name="Liuni S."/>
            <person name="McWilliam S."/>
            <person name="Madan Babu M."/>
            <person name="Madera M."/>
            <person name="Marchionni L."/>
            <person name="Matsuda H."/>
            <person name="Matsuzawa S."/>
            <person name="Miki H."/>
            <person name="Mignone F."/>
            <person name="Miyake S."/>
            <person name="Morris K."/>
            <person name="Mottagui-Tabar S."/>
            <person name="Mulder N."/>
            <person name="Nakano N."/>
            <person name="Nakauchi H."/>
            <person name="Ng P."/>
            <person name="Nilsson R."/>
            <person name="Nishiguchi S."/>
            <person name="Nishikawa S."/>
            <person name="Nori F."/>
            <person name="Ohara O."/>
            <person name="Okazaki Y."/>
            <person name="Orlando V."/>
            <person name="Pang K.C."/>
            <person name="Pavan W.J."/>
            <person name="Pavesi G."/>
            <person name="Pesole G."/>
            <person name="Petrovsky N."/>
            <person name="Piazza S."/>
            <person name="Reed J."/>
            <person name="Reid J.F."/>
            <person name="Ring B.Z."/>
            <person name="Ringwald M."/>
            <person name="Rost B."/>
            <person name="Ruan Y."/>
            <person name="Salzberg S.L."/>
            <person name="Sandelin A."/>
            <person name="Schneider C."/>
            <person name="Schoenbach C."/>
            <person name="Sekiguchi K."/>
            <person name="Semple C.A."/>
            <person name="Seno S."/>
            <person name="Sessa L."/>
            <person name="Sheng Y."/>
            <person name="Shibata Y."/>
            <person name="Shimada H."/>
            <person name="Shimada K."/>
            <person name="Silva D."/>
            <person name="Sinclair B."/>
            <person name="Sperling S."/>
            <person name="Stupka E."/>
            <person name="Sugiura K."/>
            <person name="Sultana R."/>
            <person name="Takenaka Y."/>
            <person name="Taki K."/>
            <person name="Tammoja K."/>
            <person name="Tan S.L."/>
            <person name="Tang S."/>
            <person name="Taylor M.S."/>
            <person name="Tegner J."/>
            <person name="Teichmann S.A."/>
            <person name="Ueda H.R."/>
            <person name="van Nimwegen E."/>
            <person name="Verardo R."/>
            <person name="Wei C.L."/>
            <person name="Yagi K."/>
            <person name="Yamanishi H."/>
            <person name="Zabarovsky E."/>
            <person name="Zhu S."/>
            <person name="Zimmer A."/>
            <person name="Hide W."/>
            <person name="Bult C."/>
            <person name="Grimmond S.M."/>
            <person name="Teasdale R.D."/>
            <person name="Liu E.T."/>
            <person name="Brusic V."/>
            <person name="Quackenbush J."/>
            <person name="Wahlestedt C."/>
            <person name="Mattick J.S."/>
            <person name="Hume D.A."/>
            <person name="Kai C."/>
            <person name="Sasaki D."/>
            <person name="Tomaru Y."/>
            <person name="Fukuda S."/>
            <person name="Kanamori-Katayama M."/>
            <person name="Suzuki M."/>
            <person name="Aoki J."/>
            <person name="Arakawa T."/>
            <person name="Iida J."/>
            <person name="Imamura K."/>
            <person name="Itoh M."/>
            <person name="Kato T."/>
            <person name="Kawaji H."/>
            <person name="Kawagashira N."/>
            <person name="Kawashima T."/>
            <person name="Kojima M."/>
            <person name="Kondo S."/>
            <person name="Konno H."/>
            <person name="Nakano K."/>
            <person name="Ninomiya N."/>
            <person name="Nishio T."/>
            <person name="Okada M."/>
            <person name="Plessy C."/>
            <person name="Shibata K."/>
            <person name="Shiraki T."/>
            <person name="Suzuki S."/>
            <person name="Tagami M."/>
            <person name="Waki K."/>
            <person name="Watahiki A."/>
            <person name="Okamura-Oho Y."/>
            <person name="Suzuki H."/>
            <person name="Kawai J."/>
            <person name="Hayashizaki Y."/>
        </authorList>
    </citation>
    <scope>NUCLEOTIDE SEQUENCE [LARGE SCALE MRNA]</scope>
    <source>
        <strain>C57BL/6J</strain>
        <tissue>Embryo</tissue>
        <tissue>Stomach</tissue>
    </source>
</reference>
<reference key="2">
    <citation type="journal article" date="2004" name="Genome Res.">
        <title>The status, quality, and expansion of the NIH full-length cDNA project: the Mammalian Gene Collection (MGC).</title>
        <authorList>
            <consortium name="The MGC Project Team"/>
        </authorList>
    </citation>
    <scope>NUCLEOTIDE SEQUENCE [LARGE SCALE MRNA]</scope>
    <source>
        <strain>C57BL/6J</strain>
        <tissue>Brain</tissue>
    </source>
</reference>
<reference key="3">
    <citation type="submission" date="2007-04" db="UniProtKB">
        <authorList>
            <person name="Lubec G."/>
            <person name="Kang S.U."/>
        </authorList>
    </citation>
    <scope>PROTEIN SEQUENCE OF 2-16 AND 47-57</scope>
    <scope>IDENTIFICATION BY MASS SPECTROMETRY</scope>
    <source>
        <strain>C57BL/6J</strain>
        <tissue>Brain</tissue>
    </source>
</reference>
<reference key="4">
    <citation type="journal article" date="2017" name="J. Clin. Invest.">
        <title>Isolated polycystic liver disease genes define effectors of polycystin-1 function.</title>
        <authorList>
            <person name="Besse W."/>
            <person name="Dong K."/>
            <person name="Choi J."/>
            <person name="Punia S."/>
            <person name="Fedeles S.V."/>
            <person name="Choi M."/>
            <person name="Gallagher A.R."/>
            <person name="Huang E.B."/>
            <person name="Gulati A."/>
            <person name="Knight J."/>
            <person name="Mane S."/>
            <person name="Tahvanainen E."/>
            <person name="Tahvanainen P."/>
            <person name="Sanna-Cherchi S."/>
            <person name="Lifton R.P."/>
            <person name="Watnick T."/>
            <person name="Pei Y.P."/>
            <person name="Torres V.E."/>
            <person name="Somlo S."/>
        </authorList>
    </citation>
    <scope>FUNCTION</scope>
</reference>
<protein>
    <recommendedName>
        <fullName>Protein transport protein Sec61 subunit beta</fullName>
    </recommendedName>
</protein>
<gene>
    <name evidence="7 9" type="primary">Sec61b</name>
</gene>
<dbReference type="EMBL" id="AK004505">
    <property type="protein sequence ID" value="BAB23338.1"/>
    <property type="molecule type" value="mRNA"/>
</dbReference>
<dbReference type="EMBL" id="AK008739">
    <property type="protein sequence ID" value="BAB25868.1"/>
    <property type="molecule type" value="mRNA"/>
</dbReference>
<dbReference type="EMBL" id="BC002089">
    <property type="protein sequence ID" value="AAH02089.1"/>
    <property type="molecule type" value="mRNA"/>
</dbReference>
<dbReference type="EMBL" id="BC081445">
    <property type="protein sequence ID" value="AAH81445.1"/>
    <property type="molecule type" value="mRNA"/>
</dbReference>
<dbReference type="CCDS" id="CCDS38759.1"/>
<dbReference type="RefSeq" id="NP_077133.1">
    <property type="nucleotide sequence ID" value="NM_024171.2"/>
</dbReference>
<dbReference type="SMR" id="Q9CQS8"/>
<dbReference type="BioGRID" id="211302">
    <property type="interactions" value="9"/>
</dbReference>
<dbReference type="CORUM" id="Q9CQS8"/>
<dbReference type="FunCoup" id="Q9CQS8">
    <property type="interactions" value="1317"/>
</dbReference>
<dbReference type="IntAct" id="Q9CQS8">
    <property type="interactions" value="2"/>
</dbReference>
<dbReference type="STRING" id="10090.ENSMUSP00000067681"/>
<dbReference type="GlyGen" id="Q9CQS8">
    <property type="glycosylation" value="2 sites, 1 O-linked glycan (1 site)"/>
</dbReference>
<dbReference type="iPTMnet" id="Q9CQS8"/>
<dbReference type="PhosphoSitePlus" id="Q9CQS8"/>
<dbReference type="SwissPalm" id="Q9CQS8"/>
<dbReference type="jPOST" id="Q9CQS8"/>
<dbReference type="PaxDb" id="10090-ENSMUSP00000067681"/>
<dbReference type="PeptideAtlas" id="Q9CQS8"/>
<dbReference type="ProteomicsDB" id="255349"/>
<dbReference type="Pumba" id="Q9CQS8"/>
<dbReference type="TopDownProteomics" id="Q9CQS8"/>
<dbReference type="DNASU" id="66212"/>
<dbReference type="Ensembl" id="ENSMUST00000065678.6">
    <property type="protein sequence ID" value="ENSMUSP00000067681.6"/>
    <property type="gene ID" value="ENSMUSG00000053317.12"/>
</dbReference>
<dbReference type="GeneID" id="66212"/>
<dbReference type="KEGG" id="mmu:66212"/>
<dbReference type="UCSC" id="uc008sur.1">
    <property type="organism name" value="mouse"/>
</dbReference>
<dbReference type="AGR" id="MGI:1913462"/>
<dbReference type="CTD" id="10952"/>
<dbReference type="MGI" id="MGI:1913462">
    <property type="gene designation" value="Sec61b"/>
</dbReference>
<dbReference type="VEuPathDB" id="HostDB:ENSMUSG00000053317"/>
<dbReference type="eggNOG" id="KOG3457">
    <property type="taxonomic scope" value="Eukaryota"/>
</dbReference>
<dbReference type="GeneTree" id="ENSGT00390000003561"/>
<dbReference type="HOGENOM" id="CLU_133423_4_0_1"/>
<dbReference type="InParanoid" id="Q9CQS8"/>
<dbReference type="OMA" id="SSGMWRF"/>
<dbReference type="OrthoDB" id="85715at9989"/>
<dbReference type="PhylomeDB" id="Q9CQS8"/>
<dbReference type="TreeFam" id="TF313144"/>
<dbReference type="Reactome" id="R-MMU-9609523">
    <property type="pathway name" value="Insertion of tail-anchored proteins into the endoplasmic reticulum membrane"/>
</dbReference>
<dbReference type="BioGRID-ORCS" id="66212">
    <property type="hits" value="9 hits in 80 CRISPR screens"/>
</dbReference>
<dbReference type="ChiTaRS" id="Sec61b">
    <property type="organism name" value="mouse"/>
</dbReference>
<dbReference type="PRO" id="PR:Q9CQS8"/>
<dbReference type="Proteomes" id="UP000000589">
    <property type="component" value="Chromosome 4"/>
</dbReference>
<dbReference type="RNAct" id="Q9CQS8">
    <property type="molecule type" value="protein"/>
</dbReference>
<dbReference type="Bgee" id="ENSMUSG00000053317">
    <property type="expression patterns" value="Expressed in parotid gland and 254 other cell types or tissues"/>
</dbReference>
<dbReference type="ExpressionAtlas" id="Q9CQS8">
    <property type="expression patterns" value="baseline and differential"/>
</dbReference>
<dbReference type="GO" id="GO:0005783">
    <property type="term" value="C:endoplasmic reticulum"/>
    <property type="evidence" value="ECO:0000314"/>
    <property type="project" value="MGI"/>
</dbReference>
<dbReference type="GO" id="GO:0005789">
    <property type="term" value="C:endoplasmic reticulum membrane"/>
    <property type="evidence" value="ECO:0000250"/>
    <property type="project" value="UniProtKB"/>
</dbReference>
<dbReference type="GO" id="GO:0044322">
    <property type="term" value="C:endoplasmic reticulum quality control compartment"/>
    <property type="evidence" value="ECO:0000314"/>
    <property type="project" value="UniProtKB"/>
</dbReference>
<dbReference type="GO" id="GO:0016020">
    <property type="term" value="C:membrane"/>
    <property type="evidence" value="ECO:0000266"/>
    <property type="project" value="MGI"/>
</dbReference>
<dbReference type="GO" id="GO:0005784">
    <property type="term" value="C:Sec61 translocon complex"/>
    <property type="evidence" value="ECO:0007669"/>
    <property type="project" value="Ensembl"/>
</dbReference>
<dbReference type="GO" id="GO:0048408">
    <property type="term" value="F:epidermal growth factor binding"/>
    <property type="evidence" value="ECO:0007669"/>
    <property type="project" value="Ensembl"/>
</dbReference>
<dbReference type="GO" id="GO:0043022">
    <property type="term" value="F:ribosome binding"/>
    <property type="evidence" value="ECO:0000314"/>
    <property type="project" value="MGI"/>
</dbReference>
<dbReference type="GO" id="GO:0030970">
    <property type="term" value="P:retrograde protein transport, ER to cytosol"/>
    <property type="evidence" value="ECO:0007669"/>
    <property type="project" value="Ensembl"/>
</dbReference>
<dbReference type="InterPro" id="IPR030671">
    <property type="entry name" value="Sec61-beta/Sbh"/>
</dbReference>
<dbReference type="InterPro" id="IPR016482">
    <property type="entry name" value="SecG/Sec61-beta/Sbh"/>
</dbReference>
<dbReference type="PANTHER" id="PTHR13509">
    <property type="entry name" value="SEC61 SUBUNIT BETA"/>
    <property type="match status" value="1"/>
</dbReference>
<dbReference type="Pfam" id="PF03911">
    <property type="entry name" value="Sec61_beta"/>
    <property type="match status" value="1"/>
</dbReference>
<dbReference type="PIRSF" id="PIRSF006398">
    <property type="entry name" value="Sec61_beta_euk"/>
    <property type="match status" value="1"/>
</dbReference>
<accession>Q9CQS8</accession>